<evidence type="ECO:0000255" key="1"/>
<evidence type="ECO:0000303" key="2">
    <source>
    </source>
</evidence>
<evidence type="ECO:0000303" key="3">
    <source ref="1"/>
</evidence>
<evidence type="ECO:0000305" key="4"/>
<evidence type="ECO:0000305" key="5">
    <source>
    </source>
</evidence>
<feature type="chain" id="PRO_0000455232" description="Pycsar effector protein SaPycTM">
    <location>
        <begin position="1"/>
        <end position="158"/>
    </location>
</feature>
<feature type="transmembrane region" description="Helical" evidence="1">
    <location>
        <begin position="20"/>
        <end position="40"/>
    </location>
</feature>
<feature type="transmembrane region" description="Helical" evidence="1">
    <location>
        <begin position="53"/>
        <end position="73"/>
    </location>
</feature>
<feature type="transmembrane region" description="Helical" evidence="1">
    <location>
        <begin position="136"/>
        <end position="156"/>
    </location>
</feature>
<keyword id="KW-0051">Antiviral defense</keyword>
<keyword id="KW-1003">Cell membrane</keyword>
<keyword id="KW-0472">Membrane</keyword>
<keyword id="KW-0547">Nucleotide-binding</keyword>
<keyword id="KW-0812">Transmembrane</keyword>
<keyword id="KW-1133">Transmembrane helix</keyword>
<sequence>MKKDEYIKLHQSYLNEYIKFADAKALAIISINGFILNFNFSKRNIKFHNTEDIFNFTAFILLIITIILAAFAVYPRTNNRSEKGIIFWDNINSMGEKEFIEKVKFEKEEELLEKTIQQNYFLAKTASMKYSIIRKVFIISALGYSCLLFSSIFQIICS</sequence>
<reference key="1">
    <citation type="submission" date="2015-03" db="EMBL/GenBank/DDBJ databases">
        <authorList>
            <consortium name="Pathogen Informatics"/>
        </authorList>
    </citation>
    <scope>NUCLEOTIDE SEQUENCE [LARGE SCALE GENOMIC DNA]</scope>
    <source>
        <strain>BSAR724</strain>
    </source>
</reference>
<reference key="2">
    <citation type="journal article" date="2021" name="Cell">
        <title>Cyclic CMP and cyclic UMP mediate bacterial immunity against phages.</title>
        <authorList>
            <person name="Tal N."/>
            <person name="Morehouse B.R."/>
            <person name="Millman A."/>
            <person name="Stokar-Avihail A."/>
            <person name="Avraham C."/>
            <person name="Fedorenko T."/>
            <person name="Yirmiya E."/>
            <person name="Herbst E."/>
            <person name="Brandis A."/>
            <person name="Mehlman T."/>
            <person name="Oppenheimer-Shaanan Y."/>
            <person name="Keszei A.F.A."/>
            <person name="Shao S."/>
            <person name="Amitai G."/>
            <person name="Kranzusch P.J."/>
            <person name="Sorek R."/>
        </authorList>
    </citation>
    <scope>PROBABLE FUNCTION</scope>
    <scope>CLASSIFICATION</scope>
    <source>
        <strain>BSAR724</strain>
    </source>
</reference>
<gene>
    <name evidence="2" type="primary">pycTM</name>
    <name evidence="3" type="ORF">ERS179182_02233</name>
</gene>
<organism>
    <name type="scientific">Staphylococcus aureus</name>
    <dbReference type="NCBI Taxonomy" id="1280"/>
    <lineage>
        <taxon>Bacteria</taxon>
        <taxon>Bacillati</taxon>
        <taxon>Bacillota</taxon>
        <taxon>Bacilli</taxon>
        <taxon>Bacillales</taxon>
        <taxon>Staphylococcaceae</taxon>
        <taxon>Staphylococcus</taxon>
    </lineage>
</organism>
<comment type="function">
    <text evidence="5">Pycsar (pyrimidine cyclase system for antiphage resistance) provides immunity against bacteriophage. The pyrimidine cyclase (PycC) synthesizes cyclic nucleotides in response to infection; these serve as specific second messenger signals. The signals activate the adjacent effector, leading to bacterial cell death and abortive phage infection. A clade E Pycsar system.</text>
</comment>
<comment type="function">
    <text evidence="5">The effector gene of a two-gene Pycsar system. Expression of this and adjacent SaPycC cytidylate cyclase (AC P0DV38) probably confers resistance to bacteriophage. The genes are probably only expressed in response to bacteriophage infection. Probably only responds to cCMP (produced by its cognate NTP cyclase), acts by impairing membrane integrity.</text>
</comment>
<comment type="subcellular location">
    <subcellularLocation>
        <location evidence="4">Cell membrane</location>
        <topology evidence="1">Multi-pass membrane protein</topology>
    </subcellularLocation>
</comment>
<accession>P0DV39</accession>
<dbReference type="EMBL" id="CSOZ01000027">
    <property type="protein sequence ID" value="CPM02516.1"/>
    <property type="molecule type" value="Genomic_DNA"/>
</dbReference>
<dbReference type="SMR" id="P0DV39"/>
<dbReference type="GO" id="GO:0005886">
    <property type="term" value="C:plasma membrane"/>
    <property type="evidence" value="ECO:0007669"/>
    <property type="project" value="UniProtKB-SubCell"/>
</dbReference>
<dbReference type="GO" id="GO:0000166">
    <property type="term" value="F:nucleotide binding"/>
    <property type="evidence" value="ECO:0007669"/>
    <property type="project" value="UniProtKB-KW"/>
</dbReference>
<dbReference type="GO" id="GO:0051607">
    <property type="term" value="P:defense response to virus"/>
    <property type="evidence" value="ECO:0007669"/>
    <property type="project" value="UniProtKB-KW"/>
</dbReference>
<dbReference type="InterPro" id="IPR043760">
    <property type="entry name" value="PycTM"/>
</dbReference>
<dbReference type="Pfam" id="PF18967">
    <property type="entry name" value="PycTM"/>
    <property type="match status" value="1"/>
</dbReference>
<name>PCTM_STAAU</name>
<proteinExistence type="inferred from homology"/>
<protein>
    <recommendedName>
        <fullName>Pycsar effector protein SaPycTM</fullName>
        <shortName evidence="2">SaPycTM</shortName>
    </recommendedName>
</protein>